<reference key="1">
    <citation type="journal article" date="2000" name="Nature">
        <title>The genome sequence of the food-borne pathogen Campylobacter jejuni reveals hypervariable sequences.</title>
        <authorList>
            <person name="Parkhill J."/>
            <person name="Wren B.W."/>
            <person name="Mungall K.L."/>
            <person name="Ketley J.M."/>
            <person name="Churcher C.M."/>
            <person name="Basham D."/>
            <person name="Chillingworth T."/>
            <person name="Davies R.M."/>
            <person name="Feltwell T."/>
            <person name="Holroyd S."/>
            <person name="Jagels K."/>
            <person name="Karlyshev A.V."/>
            <person name="Moule S."/>
            <person name="Pallen M.J."/>
            <person name="Penn C.W."/>
            <person name="Quail M.A."/>
            <person name="Rajandream M.A."/>
            <person name="Rutherford K.M."/>
            <person name="van Vliet A.H.M."/>
            <person name="Whitehead S."/>
            <person name="Barrell B.G."/>
        </authorList>
    </citation>
    <scope>NUCLEOTIDE SEQUENCE [LARGE SCALE GENOMIC DNA]</scope>
    <source>
        <strain>ATCC 700819 / NCTC 11168</strain>
    </source>
</reference>
<gene>
    <name evidence="1" type="primary">rny</name>
    <name type="ordered locus">Cj1209</name>
</gene>
<comment type="function">
    <text evidence="1">Endoribonuclease that initiates mRNA decay.</text>
</comment>
<comment type="subcellular location">
    <subcellularLocation>
        <location evidence="1">Cell membrane</location>
        <topology evidence="1">Single-pass membrane protein</topology>
    </subcellularLocation>
</comment>
<comment type="similarity">
    <text evidence="1">Belongs to the RNase Y family.</text>
</comment>
<sequence length="517" mass="58026">MIESLIALIAAIVGLGIGYLVAKKINDAKYEIFVEQAKAKAKAIEYEAELILKDAKNSILNAELEVKKKYEEKTHKFQKDFNQKFDDLSKKEQKLQQEEEKLKEDKEYLCKSQKHIQNLQSDVDKLKNKYQEKLDDVLKILEHSTGLTQNEAKEIILKKVEENSREQIAHIVRKYEEEAKNEAKRKANFIIAQATSRFAGEFAAERLINVINIKNDELKGRIIGKEGRNVKTLEMVLGVDIIIDDTPGAIIVSCFNLYRRAIATKVIELLVEDGRIQPARIEEIHEKVCKEFDSAILEEGETIVMDLGLNKIHPEIVKLIGKLKYRASYGQNALAHSLEVAHLAGIIAAECGGDENLARRAGILHDIGKALTHDFEGSHVDLGAELCKRYKEHPVVINAIYAHHGHEEATSIESAAVCAADTLSAARPGARREVLEAFLKRVSELEDIAKSKEGIKNAYAINAGREIRVIANAQLVNDDESVLLAKEIAAEIQEKMQYPGEIKVNVIRELRAVEYAK</sequence>
<feature type="chain" id="PRO_0000163768" description="Ribonuclease Y">
    <location>
        <begin position="1"/>
        <end position="517"/>
    </location>
</feature>
<feature type="transmembrane region" description="Helical" evidence="1">
    <location>
        <begin position="1"/>
        <end position="21"/>
    </location>
</feature>
<feature type="domain" description="KH" evidence="1">
    <location>
        <begin position="207"/>
        <end position="273"/>
    </location>
</feature>
<feature type="domain" description="HD" evidence="2">
    <location>
        <begin position="333"/>
        <end position="426"/>
    </location>
</feature>
<protein>
    <recommendedName>
        <fullName evidence="1">Ribonuclease Y</fullName>
        <shortName evidence="1">RNase Y</shortName>
        <ecNumber evidence="1">3.1.-.-</ecNumber>
    </recommendedName>
</protein>
<proteinExistence type="inferred from homology"/>
<organism>
    <name type="scientific">Campylobacter jejuni subsp. jejuni serotype O:2 (strain ATCC 700819 / NCTC 11168)</name>
    <dbReference type="NCBI Taxonomy" id="192222"/>
    <lineage>
        <taxon>Bacteria</taxon>
        <taxon>Pseudomonadati</taxon>
        <taxon>Campylobacterota</taxon>
        <taxon>Epsilonproteobacteria</taxon>
        <taxon>Campylobacterales</taxon>
        <taxon>Campylobacteraceae</taxon>
        <taxon>Campylobacter</taxon>
    </lineage>
</organism>
<evidence type="ECO:0000255" key="1">
    <source>
        <dbReference type="HAMAP-Rule" id="MF_00335"/>
    </source>
</evidence>
<evidence type="ECO:0000255" key="2">
    <source>
        <dbReference type="PROSITE-ProRule" id="PRU01175"/>
    </source>
</evidence>
<keyword id="KW-1003">Cell membrane</keyword>
<keyword id="KW-0255">Endonuclease</keyword>
<keyword id="KW-0378">Hydrolase</keyword>
<keyword id="KW-0472">Membrane</keyword>
<keyword id="KW-0540">Nuclease</keyword>
<keyword id="KW-1185">Reference proteome</keyword>
<keyword id="KW-0694">RNA-binding</keyword>
<keyword id="KW-0812">Transmembrane</keyword>
<keyword id="KW-1133">Transmembrane helix</keyword>
<accession>Q9PN86</accession>
<accession>Q0P947</accession>
<dbReference type="EC" id="3.1.-.-" evidence="1"/>
<dbReference type="EMBL" id="AL111168">
    <property type="protein sequence ID" value="CAL35324.1"/>
    <property type="molecule type" value="Genomic_DNA"/>
</dbReference>
<dbReference type="PIR" id="C81327">
    <property type="entry name" value="C81327"/>
</dbReference>
<dbReference type="RefSeq" id="WP_002858133.1">
    <property type="nucleotide sequence ID" value="NC_002163.1"/>
</dbReference>
<dbReference type="RefSeq" id="YP_002344600.1">
    <property type="nucleotide sequence ID" value="NC_002163.1"/>
</dbReference>
<dbReference type="SMR" id="Q9PN86"/>
<dbReference type="IntAct" id="Q9PN86">
    <property type="interactions" value="42"/>
</dbReference>
<dbReference type="STRING" id="192222.Cj1209"/>
<dbReference type="PaxDb" id="192222-Cj1209"/>
<dbReference type="EnsemblBacteria" id="CAL35324">
    <property type="protein sequence ID" value="CAL35324"/>
    <property type="gene ID" value="Cj1209"/>
</dbReference>
<dbReference type="GeneID" id="905499"/>
<dbReference type="KEGG" id="cje:Cj1209"/>
<dbReference type="PATRIC" id="fig|192222.6.peg.1191"/>
<dbReference type="eggNOG" id="COG1418">
    <property type="taxonomic scope" value="Bacteria"/>
</dbReference>
<dbReference type="HOGENOM" id="CLU_028328_1_0_7"/>
<dbReference type="OrthoDB" id="9803205at2"/>
<dbReference type="Proteomes" id="UP000000799">
    <property type="component" value="Chromosome"/>
</dbReference>
<dbReference type="GO" id="GO:0005886">
    <property type="term" value="C:plasma membrane"/>
    <property type="evidence" value="ECO:0007669"/>
    <property type="project" value="UniProtKB-SubCell"/>
</dbReference>
<dbReference type="GO" id="GO:0003723">
    <property type="term" value="F:RNA binding"/>
    <property type="evidence" value="ECO:0007669"/>
    <property type="project" value="UniProtKB-UniRule"/>
</dbReference>
<dbReference type="GO" id="GO:0004521">
    <property type="term" value="F:RNA endonuclease activity"/>
    <property type="evidence" value="ECO:0007669"/>
    <property type="project" value="UniProtKB-UniRule"/>
</dbReference>
<dbReference type="GO" id="GO:0006402">
    <property type="term" value="P:mRNA catabolic process"/>
    <property type="evidence" value="ECO:0007669"/>
    <property type="project" value="UniProtKB-UniRule"/>
</dbReference>
<dbReference type="CDD" id="cd00077">
    <property type="entry name" value="HDc"/>
    <property type="match status" value="1"/>
</dbReference>
<dbReference type="CDD" id="cd22431">
    <property type="entry name" value="KH-I_RNaseY"/>
    <property type="match status" value="1"/>
</dbReference>
<dbReference type="Gene3D" id="1.10.3210.10">
    <property type="entry name" value="Hypothetical protein af1432"/>
    <property type="match status" value="1"/>
</dbReference>
<dbReference type="Gene3D" id="3.30.1370.10">
    <property type="entry name" value="K Homology domain, type 1"/>
    <property type="match status" value="1"/>
</dbReference>
<dbReference type="HAMAP" id="MF_00335">
    <property type="entry name" value="RNase_Y"/>
    <property type="match status" value="1"/>
</dbReference>
<dbReference type="InterPro" id="IPR003607">
    <property type="entry name" value="HD/PDEase_dom"/>
</dbReference>
<dbReference type="InterPro" id="IPR006674">
    <property type="entry name" value="HD_domain"/>
</dbReference>
<dbReference type="InterPro" id="IPR006675">
    <property type="entry name" value="HDIG_dom"/>
</dbReference>
<dbReference type="InterPro" id="IPR036612">
    <property type="entry name" value="KH_dom_type_1_sf"/>
</dbReference>
<dbReference type="InterPro" id="IPR017705">
    <property type="entry name" value="Ribonuclease_Y"/>
</dbReference>
<dbReference type="InterPro" id="IPR022711">
    <property type="entry name" value="RNase_Y_N"/>
</dbReference>
<dbReference type="NCBIfam" id="TIGR00277">
    <property type="entry name" value="HDIG"/>
    <property type="match status" value="1"/>
</dbReference>
<dbReference type="NCBIfam" id="TIGR03319">
    <property type="entry name" value="RNase_Y"/>
    <property type="match status" value="1"/>
</dbReference>
<dbReference type="PANTHER" id="PTHR12826">
    <property type="entry name" value="RIBONUCLEASE Y"/>
    <property type="match status" value="1"/>
</dbReference>
<dbReference type="PANTHER" id="PTHR12826:SF15">
    <property type="entry name" value="RIBONUCLEASE Y"/>
    <property type="match status" value="1"/>
</dbReference>
<dbReference type="Pfam" id="PF01966">
    <property type="entry name" value="HD"/>
    <property type="match status" value="1"/>
</dbReference>
<dbReference type="Pfam" id="PF12072">
    <property type="entry name" value="RNase_Y_N"/>
    <property type="match status" value="1"/>
</dbReference>
<dbReference type="SMART" id="SM00471">
    <property type="entry name" value="HDc"/>
    <property type="match status" value="1"/>
</dbReference>
<dbReference type="SUPFAM" id="SSF54791">
    <property type="entry name" value="Eukaryotic type KH-domain (KH-domain type I)"/>
    <property type="match status" value="1"/>
</dbReference>
<dbReference type="SUPFAM" id="SSF109604">
    <property type="entry name" value="HD-domain/PDEase-like"/>
    <property type="match status" value="1"/>
</dbReference>
<dbReference type="PROSITE" id="PS51831">
    <property type="entry name" value="HD"/>
    <property type="match status" value="1"/>
</dbReference>
<name>RNY_CAMJE</name>